<gene>
    <name type="primary">27</name>
</gene>
<name>VG27_ALHV1</name>
<dbReference type="EMBL" id="AF005370">
    <property type="protein sequence ID" value="AAC58074.1"/>
    <property type="molecule type" value="Genomic_DNA"/>
</dbReference>
<dbReference type="PIR" id="T03122">
    <property type="entry name" value="T03122"/>
</dbReference>
<dbReference type="RefSeq" id="NP_065526.1">
    <property type="nucleotide sequence ID" value="NC_002531.1"/>
</dbReference>
<dbReference type="KEGG" id="vg:911743"/>
<dbReference type="Proteomes" id="UP000000941">
    <property type="component" value="Segment"/>
</dbReference>
<dbReference type="GO" id="GO:0033644">
    <property type="term" value="C:host cell membrane"/>
    <property type="evidence" value="ECO:0007669"/>
    <property type="project" value="UniProtKB-SubCell"/>
</dbReference>
<dbReference type="GO" id="GO:0016020">
    <property type="term" value="C:membrane"/>
    <property type="evidence" value="ECO:0007669"/>
    <property type="project" value="UniProtKB-KW"/>
</dbReference>
<evidence type="ECO:0000255" key="1"/>
<evidence type="ECO:0000305" key="2"/>
<accession>O36377</accession>
<comment type="subcellular location">
    <subcellularLocation>
        <location evidence="2">Host membrane</location>
        <topology evidence="2">Single-pass membrane protein</topology>
    </subcellularLocation>
</comment>
<protein>
    <recommendedName>
        <fullName>Uncharacterized gene 27 protein</fullName>
    </recommendedName>
</protein>
<organism>
    <name type="scientific">Alcelaphine herpesvirus 1 (strain C500)</name>
    <name type="common">AlHV-1</name>
    <name type="synonym">Malignant catarrhal fever virus</name>
    <dbReference type="NCBI Taxonomy" id="654901"/>
    <lineage>
        <taxon>Viruses</taxon>
        <taxon>Duplodnaviria</taxon>
        <taxon>Heunggongvirae</taxon>
        <taxon>Peploviricota</taxon>
        <taxon>Herviviricetes</taxon>
        <taxon>Herpesvirales</taxon>
        <taxon>Orthoherpesviridae</taxon>
        <taxon>Gammaherpesvirinae</taxon>
        <taxon>Macavirus</taxon>
        <taxon>Macavirus alcelaphinegamma1</taxon>
    </lineage>
</organism>
<sequence length="292" mass="33862">MVGIQRLIKHDDGTVQEISITADGWVKESYYKKKTPVKPDSNPGVKYEELEPVHRVFSKKPTCQQLFFYLLFWWTYLTIVVLLTVPLNPYQIHRSYRLMMGPASYPINCNRATPDRYSRSCFSSFFCTWDIFMPEIKVQNETFYPNFTKSDGSPADYSSALLWATSFITNPNCTNFTVLYSDSSNSSQRNDSDYEVATFVMLEGLFMLRHKCHPETVYLGRRRCGAHRWRFVNVYDTSYLNHSTCSFDWASLSNASYTPQLGPNCSMANLTEEELKSGFYLHLQQVEIKPSQ</sequence>
<organismHost>
    <name type="scientific">Connochaetes taurinus</name>
    <name type="common">Blue wildebeest</name>
    <dbReference type="NCBI Taxonomy" id="9927"/>
</organismHost>
<feature type="chain" id="PRO_0000405731" description="Uncharacterized gene 27 protein">
    <location>
        <begin position="1"/>
        <end position="292"/>
    </location>
</feature>
<feature type="transmembrane region" description="Helical" evidence="1">
    <location>
        <begin position="66"/>
        <end position="86"/>
    </location>
</feature>
<proteinExistence type="predicted"/>
<reference key="1">
    <citation type="journal article" date="1997" name="J. Virol.">
        <title>Primary structure of the alcelaphine herpesvirus 1 genome.</title>
        <authorList>
            <person name="Ensser A."/>
            <person name="Pflanz R."/>
            <person name="Fleckenstein B."/>
        </authorList>
    </citation>
    <scope>NUCLEOTIDE SEQUENCE [LARGE SCALE GENOMIC DNA]</scope>
</reference>
<keyword id="KW-1043">Host membrane</keyword>
<keyword id="KW-0472">Membrane</keyword>
<keyword id="KW-1185">Reference proteome</keyword>
<keyword id="KW-0812">Transmembrane</keyword>
<keyword id="KW-1133">Transmembrane helix</keyword>